<keyword id="KW-1035">Host cytoplasm</keyword>
<keyword id="KW-0479">Metal-binding</keyword>
<keyword id="KW-1185">Reference proteome</keyword>
<keyword id="KW-0694">RNA-binding</keyword>
<keyword id="KW-0862">Zinc</keyword>
<keyword id="KW-0863">Zinc-finger</keyword>
<accession>Q85442</accession>
<evidence type="ECO:0000255" key="1"/>
<evidence type="ECO:0000256" key="2">
    <source>
        <dbReference type="SAM" id="MobiDB-lite"/>
    </source>
</evidence>
<evidence type="ECO:0000269" key="3">
    <source>
    </source>
</evidence>
<evidence type="ECO:0000305" key="4"/>
<dbReference type="EMBL" id="U36568">
    <property type="protein sequence ID" value="AAA88767.1"/>
    <property type="molecule type" value="mRNA"/>
</dbReference>
<dbReference type="PIR" id="JC6064">
    <property type="entry name" value="JC6064"/>
</dbReference>
<dbReference type="RefSeq" id="NP_620537.1">
    <property type="nucleotide sequence ID" value="NC_003767.1"/>
</dbReference>
<dbReference type="GeneID" id="956502"/>
<dbReference type="KEGG" id="vg:956502"/>
<dbReference type="Proteomes" id="UP000002239">
    <property type="component" value="Genome"/>
</dbReference>
<dbReference type="GO" id="GO:0030430">
    <property type="term" value="C:host cell cytoplasm"/>
    <property type="evidence" value="ECO:0007669"/>
    <property type="project" value="UniProtKB-SubCell"/>
</dbReference>
<dbReference type="GO" id="GO:0003723">
    <property type="term" value="F:RNA binding"/>
    <property type="evidence" value="ECO:0007669"/>
    <property type="project" value="UniProtKB-KW"/>
</dbReference>
<dbReference type="GO" id="GO:0008270">
    <property type="term" value="F:zinc ion binding"/>
    <property type="evidence" value="ECO:0007669"/>
    <property type="project" value="UniProtKB-KW"/>
</dbReference>
<dbReference type="InterPro" id="IPR035351">
    <property type="entry name" value="Pns11/12"/>
</dbReference>
<dbReference type="Pfam" id="PF17464">
    <property type="entry name" value="Pns11_12"/>
    <property type="match status" value="1"/>
</dbReference>
<sequence length="189" mass="20702">MSGTLPLAMTASESFVGMQVLAQDKEVKATFIALDRKLPANLKVPYMKNAKYRTCICPSSNHLVDDCVCEDVIIAYTAHRNNAVAALLYSDGNVIHRSGTLKPKSQNRFDLRGFLTSVNPGESSKAEAGTSKSTQKAYDRKDKSPSKGKNSKKGGKKSSSERKRKEYSSNSETDLSSDSDANTRKSKRK</sequence>
<name>NSP11_RDVF</name>
<protein>
    <recommendedName>
        <fullName>RNA-binding protein</fullName>
    </recommendedName>
    <alternativeName>
        <fullName>Non-structural protein 11</fullName>
        <shortName>Pns11</shortName>
    </alternativeName>
</protein>
<feature type="chain" id="PRO_0000222801" description="RNA-binding protein">
    <location>
        <begin position="1"/>
        <end position="189"/>
    </location>
</feature>
<feature type="zinc finger region" description="C4-type" evidence="1">
    <location>
        <begin position="55"/>
        <end position="69"/>
    </location>
</feature>
<feature type="region of interest" description="Disordered" evidence="2">
    <location>
        <begin position="114"/>
        <end position="189"/>
    </location>
</feature>
<feature type="compositionally biased region" description="Basic and acidic residues" evidence="2">
    <location>
        <begin position="158"/>
        <end position="167"/>
    </location>
</feature>
<feature type="compositionally biased region" description="Low complexity" evidence="2">
    <location>
        <begin position="168"/>
        <end position="180"/>
    </location>
</feature>
<comment type="function">
    <text evidence="3">Constituent of viral factories. Binds to ssRNA and dsRNA.</text>
</comment>
<comment type="subcellular location">
    <subcellularLocation>
        <location evidence="3">Host cytoplasm</location>
    </subcellularLocation>
    <text>Constituent of spherical cytoplasmic structures, called virus factories, that appear early after infection and are the site of viral replication and packaging.</text>
</comment>
<comment type="similarity">
    <text evidence="4">Belongs to the phytoreovirus RNA-binding protein family.</text>
</comment>
<organismHost>
    <name type="scientific">Alopecurus aequalis</name>
    <dbReference type="NCBI Taxonomy" id="114194"/>
</organismHost>
<organismHost>
    <name type="scientific">Echinochloa crus-galli</name>
    <name type="common">Barnyard grass</name>
    <name type="synonym">Panicum crus-galli</name>
    <dbReference type="NCBI Taxonomy" id="90397"/>
</organismHost>
<organismHost>
    <name type="scientific">Nephotettix cincticeps</name>
    <name type="common">Green rice leafhopper</name>
    <name type="synonym">Selenocephalus cincticeps</name>
    <dbReference type="NCBI Taxonomy" id="94400"/>
</organismHost>
<organismHost>
    <name type="scientific">Oryza sativa</name>
    <name type="common">Rice</name>
    <dbReference type="NCBI Taxonomy" id="4530"/>
</organismHost>
<organismHost>
    <name type="scientific">Paspalum</name>
    <dbReference type="NCBI Taxonomy" id="147271"/>
</organismHost>
<proteinExistence type="evidence at protein level"/>
<reference key="1">
    <citation type="journal article" date="1996" name="Chin. J. Biotechnol.">
        <title>Nucleotide sequence of rice dwarf virus genome segment S11 and functional analysis of S11 encoded protein.</title>
        <authorList>
            <person name="Xiao J."/>
            <person name="Li Y."/>
            <person name="Quan S."/>
            <person name="Gu H."/>
            <person name="Chen Z."/>
        </authorList>
    </citation>
    <scope>NUCLEOTIDE SEQUENCE [MRNA]</scope>
</reference>
<reference key="2">
    <citation type="journal article" date="1998" name="Virology">
        <title>Rice dwarf phytoreovirus segment S11 encodes a nucleic acid binding protein.</title>
        <authorList>
            <person name="Xu H."/>
            <person name="Li Y."/>
            <person name="Mao Z."/>
            <person name="Li Y."/>
            <person name="Wu Z."/>
            <person name="Qu L."/>
            <person name="An C."/>
            <person name="Ming X."/>
            <person name="Schiemann J."/>
            <person name="Casper R."/>
            <person name="Chen Z."/>
        </authorList>
    </citation>
    <scope>RNA-BINDING</scope>
</reference>
<reference key="3">
    <citation type="journal article" date="2006" name="J. Gen. Virol.">
        <title>Pns12 protein of Rice dwarf virus is essential for formation of viroplasms and nucleation of viral-assembly complexes.</title>
        <authorList>
            <person name="Wei T."/>
            <person name="Shimizu T."/>
            <person name="Hagiwara K."/>
            <person name="Kikuchi A."/>
            <person name="Moriyasu Y."/>
            <person name="Suzuki N."/>
            <person name="Chen H."/>
            <person name="Omura T."/>
        </authorList>
    </citation>
    <scope>FUNCTION</scope>
    <scope>SUBCELLULAR LOCATION</scope>
</reference>
<organism>
    <name type="scientific">Rice dwarf virus (isolate Fujian)</name>
    <name type="common">RDV</name>
    <dbReference type="NCBI Taxonomy" id="142804"/>
    <lineage>
        <taxon>Viruses</taxon>
        <taxon>Riboviria</taxon>
        <taxon>Orthornavirae</taxon>
        <taxon>Duplornaviricota</taxon>
        <taxon>Resentoviricetes</taxon>
        <taxon>Reovirales</taxon>
        <taxon>Sedoreoviridae</taxon>
        <taxon>Phytoreovirus</taxon>
        <taxon>Rice dwarf virus</taxon>
    </lineage>
</organism>